<comment type="function">
    <text evidence="1">Catalytic subunit of the slx1-slx4 structure-specific endonuclease that resolves DNA secondary structures generated during DNA repair and recombination. Has endonuclease activity towards branched DNA substrates, introducing single-strand cuts in duplex DNA close to junctions with ss-DNA.</text>
</comment>
<comment type="cofactor">
    <cofactor evidence="1">
        <name>a divalent metal cation</name>
        <dbReference type="ChEBI" id="CHEBI:60240"/>
    </cofactor>
</comment>
<comment type="subunit">
    <text evidence="1">Forms a heterodimer with slx4.</text>
</comment>
<comment type="subcellular location">
    <subcellularLocation>
        <location evidence="1">Nucleus</location>
    </subcellularLocation>
</comment>
<comment type="similarity">
    <text evidence="1">Belongs to the SLX1 family.</text>
</comment>
<feature type="chain" id="PRO_0000383773" description="Structure-specific endonuclease subunit slx1">
    <location>
        <begin position="1"/>
        <end position="423"/>
    </location>
</feature>
<feature type="domain" description="GIY-YIG" evidence="1">
    <location>
        <begin position="14"/>
        <end position="96"/>
    </location>
</feature>
<feature type="zinc finger region" description="SLX1-type" evidence="1">
    <location>
        <begin position="253"/>
        <end position="308"/>
    </location>
</feature>
<feature type="region of interest" description="Disordered" evidence="2">
    <location>
        <begin position="114"/>
        <end position="147"/>
    </location>
</feature>
<feature type="compositionally biased region" description="Basic residues" evidence="2">
    <location>
        <begin position="131"/>
        <end position="147"/>
    </location>
</feature>
<gene>
    <name type="primary">slx1</name>
    <name type="ORF">AFUB_051960</name>
</gene>
<proteinExistence type="inferred from homology"/>
<keyword id="KW-0227">DNA damage</keyword>
<keyword id="KW-0233">DNA recombination</keyword>
<keyword id="KW-0234">DNA repair</keyword>
<keyword id="KW-0255">Endonuclease</keyword>
<keyword id="KW-0378">Hydrolase</keyword>
<keyword id="KW-0479">Metal-binding</keyword>
<keyword id="KW-0540">Nuclease</keyword>
<keyword id="KW-0539">Nucleus</keyword>
<keyword id="KW-0862">Zinc</keyword>
<keyword id="KW-0863">Zinc-finger</keyword>
<reference key="1">
    <citation type="journal article" date="2008" name="PLoS Genet.">
        <title>Genomic islands in the pathogenic filamentous fungus Aspergillus fumigatus.</title>
        <authorList>
            <person name="Fedorova N.D."/>
            <person name="Khaldi N."/>
            <person name="Joardar V.S."/>
            <person name="Maiti R."/>
            <person name="Amedeo P."/>
            <person name="Anderson M.J."/>
            <person name="Crabtree J."/>
            <person name="Silva J.C."/>
            <person name="Badger J.H."/>
            <person name="Albarraq A."/>
            <person name="Angiuoli S."/>
            <person name="Bussey H."/>
            <person name="Bowyer P."/>
            <person name="Cotty P.J."/>
            <person name="Dyer P.S."/>
            <person name="Egan A."/>
            <person name="Galens K."/>
            <person name="Fraser-Liggett C.M."/>
            <person name="Haas B.J."/>
            <person name="Inman J.M."/>
            <person name="Kent R."/>
            <person name="Lemieux S."/>
            <person name="Malavazi I."/>
            <person name="Orvis J."/>
            <person name="Roemer T."/>
            <person name="Ronning C.M."/>
            <person name="Sundaram J.P."/>
            <person name="Sutton G."/>
            <person name="Turner G."/>
            <person name="Venter J.C."/>
            <person name="White O.R."/>
            <person name="Whitty B.R."/>
            <person name="Youngman P."/>
            <person name="Wolfe K.H."/>
            <person name="Goldman G.H."/>
            <person name="Wortman J.R."/>
            <person name="Jiang B."/>
            <person name="Denning D.W."/>
            <person name="Nierman W.C."/>
        </authorList>
    </citation>
    <scope>NUCLEOTIDE SEQUENCE [LARGE SCALE GENOMIC DNA]</scope>
    <source>
        <strain>CBS 144.89 / FGSC A1163 / CEA10</strain>
    </source>
</reference>
<accession>B0Y2U0</accession>
<sequence>MDDTQIEHPRPIPIFYCCYLLRSTVRHASLYIGSTPNPARRLIQHNGVVKGGARRTAAEKLRPWEMVLVVEGFMSRLAALQFEWAWQNPWYSRHLRSEESSALAEVKHRRMRKAKSEDPEFLDSNCDSAKSRVKGTPKKSKRRHRPPRSLDTYFSDLHRLLRSTYFSHWPLKIRFFSGDIYQSWKAWYDRVDVRLRSPVKVILDGSCPEISAHAGGNDTRFGGVENAKITYAAIRDYIEKAIFLLDDPKDVRCHVCQGQIVPTEELTTVCPQAECHCTCHLLCLSRKFVDAALEPNQIVPKHGICPACEATIEWPLMMKELSFRSRAKQELLEILKRKRRVDRKQGAVTGEVESSSRRTVSVDLDDRFGQHAEDEFLLDEDWWEGLAAESDSDTDLRLKPLSKAAPKLETVIEDSECDDADIL</sequence>
<name>SLX1_ASPFC</name>
<protein>
    <recommendedName>
        <fullName evidence="1">Structure-specific endonuclease subunit slx1</fullName>
        <ecNumber evidence="1">3.1.-.-</ecNumber>
    </recommendedName>
</protein>
<organism>
    <name type="scientific">Aspergillus fumigatus (strain CBS 144.89 / FGSC A1163 / CEA10)</name>
    <name type="common">Neosartorya fumigata</name>
    <dbReference type="NCBI Taxonomy" id="451804"/>
    <lineage>
        <taxon>Eukaryota</taxon>
        <taxon>Fungi</taxon>
        <taxon>Dikarya</taxon>
        <taxon>Ascomycota</taxon>
        <taxon>Pezizomycotina</taxon>
        <taxon>Eurotiomycetes</taxon>
        <taxon>Eurotiomycetidae</taxon>
        <taxon>Eurotiales</taxon>
        <taxon>Aspergillaceae</taxon>
        <taxon>Aspergillus</taxon>
        <taxon>Aspergillus subgen. Fumigati</taxon>
    </lineage>
</organism>
<dbReference type="EC" id="3.1.-.-" evidence="1"/>
<dbReference type="EMBL" id="DS499597">
    <property type="protein sequence ID" value="EDP51192.1"/>
    <property type="molecule type" value="Genomic_DNA"/>
</dbReference>
<dbReference type="SMR" id="B0Y2U0"/>
<dbReference type="EnsemblFungi" id="EDP51192">
    <property type="protein sequence ID" value="EDP51192"/>
    <property type="gene ID" value="AFUB_051960"/>
</dbReference>
<dbReference type="VEuPathDB" id="FungiDB:AFUB_051960"/>
<dbReference type="HOGENOM" id="CLU_030739_1_0_1"/>
<dbReference type="OrthoDB" id="113076at5052"/>
<dbReference type="PhylomeDB" id="B0Y2U0"/>
<dbReference type="Proteomes" id="UP000001699">
    <property type="component" value="Unassembled WGS sequence"/>
</dbReference>
<dbReference type="GO" id="GO:0033557">
    <property type="term" value="C:Slx1-Slx4 complex"/>
    <property type="evidence" value="ECO:0007669"/>
    <property type="project" value="UniProtKB-UniRule"/>
</dbReference>
<dbReference type="GO" id="GO:0017108">
    <property type="term" value="F:5'-flap endonuclease activity"/>
    <property type="evidence" value="ECO:0007669"/>
    <property type="project" value="InterPro"/>
</dbReference>
<dbReference type="GO" id="GO:0008821">
    <property type="term" value="F:crossover junction DNA endonuclease activity"/>
    <property type="evidence" value="ECO:0007669"/>
    <property type="project" value="TreeGrafter"/>
</dbReference>
<dbReference type="GO" id="GO:0008270">
    <property type="term" value="F:zinc ion binding"/>
    <property type="evidence" value="ECO:0007669"/>
    <property type="project" value="UniProtKB-KW"/>
</dbReference>
<dbReference type="GO" id="GO:0000724">
    <property type="term" value="P:double-strand break repair via homologous recombination"/>
    <property type="evidence" value="ECO:0007669"/>
    <property type="project" value="TreeGrafter"/>
</dbReference>
<dbReference type="CDD" id="cd10455">
    <property type="entry name" value="GIY-YIG_SLX1"/>
    <property type="match status" value="1"/>
</dbReference>
<dbReference type="FunFam" id="3.40.1440.10:FF:000006">
    <property type="entry name" value="Structure-specific endonuclease subunit SLX1"/>
    <property type="match status" value="1"/>
</dbReference>
<dbReference type="FunFam" id="3.30.40.10:FF:001101">
    <property type="entry name" value="Structure-specific endonuclease subunit slx1"/>
    <property type="match status" value="1"/>
</dbReference>
<dbReference type="Gene3D" id="3.40.1440.10">
    <property type="entry name" value="GIY-YIG endonuclease"/>
    <property type="match status" value="1"/>
</dbReference>
<dbReference type="Gene3D" id="3.30.40.10">
    <property type="entry name" value="Zinc/RING finger domain, C3HC4 (zinc finger)"/>
    <property type="match status" value="1"/>
</dbReference>
<dbReference type="HAMAP" id="MF_03100">
    <property type="entry name" value="Endonuc_su_Slx1"/>
    <property type="match status" value="1"/>
</dbReference>
<dbReference type="InterPro" id="IPR000305">
    <property type="entry name" value="GIY-YIG_endonuc"/>
</dbReference>
<dbReference type="InterPro" id="IPR035901">
    <property type="entry name" value="GIY-YIG_endonuc_sf"/>
</dbReference>
<dbReference type="InterPro" id="IPR027520">
    <property type="entry name" value="Slx1"/>
</dbReference>
<dbReference type="InterPro" id="IPR048749">
    <property type="entry name" value="SLX1_C"/>
</dbReference>
<dbReference type="InterPro" id="IPR050381">
    <property type="entry name" value="SLX1_endonuclease"/>
</dbReference>
<dbReference type="InterPro" id="IPR013083">
    <property type="entry name" value="Znf_RING/FYVE/PHD"/>
</dbReference>
<dbReference type="PANTHER" id="PTHR20208">
    <property type="entry name" value="STRUCTURE-SPECIFIC ENDONUCLEASE SUBUNIT SLX1"/>
    <property type="match status" value="1"/>
</dbReference>
<dbReference type="PANTHER" id="PTHR20208:SF10">
    <property type="entry name" value="STRUCTURE-SPECIFIC ENDONUCLEASE SUBUNIT SLX1"/>
    <property type="match status" value="1"/>
</dbReference>
<dbReference type="Pfam" id="PF01541">
    <property type="entry name" value="GIY-YIG"/>
    <property type="match status" value="1"/>
</dbReference>
<dbReference type="Pfam" id="PF21202">
    <property type="entry name" value="SLX1_C"/>
    <property type="match status" value="1"/>
</dbReference>
<dbReference type="SUPFAM" id="SSF82771">
    <property type="entry name" value="GIY-YIG endonuclease"/>
    <property type="match status" value="1"/>
</dbReference>
<dbReference type="PROSITE" id="PS50164">
    <property type="entry name" value="GIY_YIG"/>
    <property type="match status" value="1"/>
</dbReference>
<evidence type="ECO:0000255" key="1">
    <source>
        <dbReference type="HAMAP-Rule" id="MF_03100"/>
    </source>
</evidence>
<evidence type="ECO:0000256" key="2">
    <source>
        <dbReference type="SAM" id="MobiDB-lite"/>
    </source>
</evidence>